<comment type="catalytic activity">
    <reaction evidence="1">
        <text>D-glyceraldehyde 3-phosphate + phosphate + NADP(+) = (2R)-3-phospho-glyceroyl phosphate + NADPH + H(+)</text>
        <dbReference type="Rhea" id="RHEA:10296"/>
        <dbReference type="ChEBI" id="CHEBI:15378"/>
        <dbReference type="ChEBI" id="CHEBI:43474"/>
        <dbReference type="ChEBI" id="CHEBI:57604"/>
        <dbReference type="ChEBI" id="CHEBI:57783"/>
        <dbReference type="ChEBI" id="CHEBI:58349"/>
        <dbReference type="ChEBI" id="CHEBI:59776"/>
        <dbReference type="EC" id="1.2.1.59"/>
    </reaction>
</comment>
<comment type="catalytic activity">
    <reaction evidence="1">
        <text>D-glyceraldehyde 3-phosphate + phosphate + NAD(+) = (2R)-3-phospho-glyceroyl phosphate + NADH + H(+)</text>
        <dbReference type="Rhea" id="RHEA:10300"/>
        <dbReference type="ChEBI" id="CHEBI:15378"/>
        <dbReference type="ChEBI" id="CHEBI:43474"/>
        <dbReference type="ChEBI" id="CHEBI:57540"/>
        <dbReference type="ChEBI" id="CHEBI:57604"/>
        <dbReference type="ChEBI" id="CHEBI:57945"/>
        <dbReference type="ChEBI" id="CHEBI:59776"/>
        <dbReference type="EC" id="1.2.1.59"/>
    </reaction>
</comment>
<comment type="pathway">
    <text evidence="1">Carbohydrate degradation; glycolysis; pyruvate from D-glyceraldehyde 3-phosphate: step 1/5.</text>
</comment>
<comment type="subunit">
    <text evidence="1">Homotetramer.</text>
</comment>
<comment type="subcellular location">
    <subcellularLocation>
        <location evidence="1">Cytoplasm</location>
    </subcellularLocation>
</comment>
<comment type="similarity">
    <text evidence="1">Belongs to the glyceraldehyde-3-phosphate dehydrogenase family.</text>
</comment>
<reference key="1">
    <citation type="journal article" date="2004" name="Genome Res.">
        <title>Genome sequence of Haloarcula marismortui: a halophilic archaeon from the Dead Sea.</title>
        <authorList>
            <person name="Baliga N.S."/>
            <person name="Bonneau R."/>
            <person name="Facciotti M.T."/>
            <person name="Pan M."/>
            <person name="Glusman G."/>
            <person name="Deutsch E.W."/>
            <person name="Shannon P."/>
            <person name="Chiu Y."/>
            <person name="Weng R.S."/>
            <person name="Gan R.R."/>
            <person name="Hung P."/>
            <person name="Date S.V."/>
            <person name="Marcotte E."/>
            <person name="Hood L."/>
            <person name="Ng W.V."/>
        </authorList>
    </citation>
    <scope>NUCLEOTIDE SEQUENCE [LARGE SCALE GENOMIC DNA]</scope>
    <source>
        <strain>ATCC 43049 / DSM 3752 / JCM 8966 / VKM B-1809</strain>
    </source>
</reference>
<sequence length="354" mass="37924">MLHVGINGFGTIGKRVADAVRVQPDMTVAGVAKRSPNFEATIADDRGYDLYAADGREPFDEADLGTAGTVHDLIETSDVVVDTTPSGVGAANASLYAEHDTPAIFQGGEDADVADVSFNARANYEKAVGADTARVVSCNTTGLSRLLAPLRESYGVEKSRVTLVRRGADPGQTGRGPINDTLPDPVEIPSHHGPDVQTIFPDLDIDTMGMKVPTTQMHTHSVNVTLESEPATEEVTALLADESRLFLIPETLGIDGAGKLKEYTRDAGRPRGDVWENCIWAESITVEGRDLYLFQAIHQEADVVPENIDAVRALSERTASAEKSIRRTDEALGVGRGLVEHDGSPQRVDSHADD</sequence>
<name>G3P_HALMA</name>
<proteinExistence type="inferred from homology"/>
<protein>
    <recommendedName>
        <fullName evidence="1">Glyceraldehyde-3-phosphate dehydrogenase</fullName>
        <shortName evidence="1">GAPDH</shortName>
        <ecNumber evidence="1">1.2.1.59</ecNumber>
    </recommendedName>
    <alternativeName>
        <fullName evidence="1">NAD(P)-dependent glyceraldehyde-3-phosphate dehydrogenase</fullName>
    </alternativeName>
</protein>
<gene>
    <name evidence="1" type="primary">gap</name>
    <name type="ordered locus">rrnAC2262</name>
</gene>
<accession>Q5V061</accession>
<organism>
    <name type="scientific">Haloarcula marismortui (strain ATCC 43049 / DSM 3752 / JCM 8966 / VKM B-1809)</name>
    <name type="common">Halobacterium marismortui</name>
    <dbReference type="NCBI Taxonomy" id="272569"/>
    <lineage>
        <taxon>Archaea</taxon>
        <taxon>Methanobacteriati</taxon>
        <taxon>Methanobacteriota</taxon>
        <taxon>Stenosarchaea group</taxon>
        <taxon>Halobacteria</taxon>
        <taxon>Halobacteriales</taxon>
        <taxon>Haloarculaceae</taxon>
        <taxon>Haloarcula</taxon>
    </lineage>
</organism>
<keyword id="KW-0963">Cytoplasm</keyword>
<keyword id="KW-0324">Glycolysis</keyword>
<keyword id="KW-0520">NAD</keyword>
<keyword id="KW-0521">NADP</keyword>
<keyword id="KW-0560">Oxidoreductase</keyword>
<keyword id="KW-1185">Reference proteome</keyword>
<dbReference type="EC" id="1.2.1.59" evidence="1"/>
<dbReference type="EMBL" id="AY596297">
    <property type="protein sequence ID" value="AAV47092.1"/>
    <property type="molecule type" value="Genomic_DNA"/>
</dbReference>
<dbReference type="RefSeq" id="WP_011224114.1">
    <property type="nucleotide sequence ID" value="NC_006396.1"/>
</dbReference>
<dbReference type="SMR" id="Q5V061"/>
<dbReference type="STRING" id="272569.rrnAC2262"/>
<dbReference type="PaxDb" id="272569-rrnAC2262"/>
<dbReference type="EnsemblBacteria" id="AAV47092">
    <property type="protein sequence ID" value="AAV47092"/>
    <property type="gene ID" value="rrnAC2262"/>
</dbReference>
<dbReference type="GeneID" id="40153157"/>
<dbReference type="KEGG" id="hma:rrnAC2262"/>
<dbReference type="PATRIC" id="fig|272569.17.peg.2891"/>
<dbReference type="eggNOG" id="arCOG00493">
    <property type="taxonomic scope" value="Archaea"/>
</dbReference>
<dbReference type="HOGENOM" id="CLU_069533_0_0_2"/>
<dbReference type="UniPathway" id="UPA00109">
    <property type="reaction ID" value="UER00184"/>
</dbReference>
<dbReference type="Proteomes" id="UP000001169">
    <property type="component" value="Chromosome I"/>
</dbReference>
<dbReference type="GO" id="GO:0005737">
    <property type="term" value="C:cytoplasm"/>
    <property type="evidence" value="ECO:0007669"/>
    <property type="project" value="UniProtKB-SubCell"/>
</dbReference>
<dbReference type="GO" id="GO:0004365">
    <property type="term" value="F:glyceraldehyde-3-phosphate dehydrogenase (NAD+) (phosphorylating) activity"/>
    <property type="evidence" value="ECO:0007669"/>
    <property type="project" value="UniProtKB-UniRule"/>
</dbReference>
<dbReference type="GO" id="GO:0047100">
    <property type="term" value="F:glyceraldehyde-3-phosphate dehydrogenase (NADP+) (phosphorylating) activity"/>
    <property type="evidence" value="ECO:0007669"/>
    <property type="project" value="RHEA"/>
</dbReference>
<dbReference type="GO" id="GO:0051287">
    <property type="term" value="F:NAD binding"/>
    <property type="evidence" value="ECO:0007669"/>
    <property type="project" value="InterPro"/>
</dbReference>
<dbReference type="GO" id="GO:0050661">
    <property type="term" value="F:NADP binding"/>
    <property type="evidence" value="ECO:0007669"/>
    <property type="project" value="InterPro"/>
</dbReference>
<dbReference type="GO" id="GO:0006096">
    <property type="term" value="P:glycolytic process"/>
    <property type="evidence" value="ECO:0007669"/>
    <property type="project" value="UniProtKB-UniRule"/>
</dbReference>
<dbReference type="CDD" id="cd18127">
    <property type="entry name" value="GAPDH_II_C"/>
    <property type="match status" value="1"/>
</dbReference>
<dbReference type="CDD" id="cd02278">
    <property type="entry name" value="GAPDH_II_N"/>
    <property type="match status" value="1"/>
</dbReference>
<dbReference type="Gene3D" id="3.30.360.10">
    <property type="entry name" value="Dihydrodipicolinate Reductase, domain 2"/>
    <property type="match status" value="1"/>
</dbReference>
<dbReference type="Gene3D" id="3.40.50.720">
    <property type="entry name" value="NAD(P)-binding Rossmann-like Domain"/>
    <property type="match status" value="1"/>
</dbReference>
<dbReference type="HAMAP" id="MF_00559">
    <property type="entry name" value="G3P_dehdrog_arch"/>
    <property type="match status" value="1"/>
</dbReference>
<dbReference type="InterPro" id="IPR020831">
    <property type="entry name" value="GlycerAld/Erythrose_P_DH"/>
</dbReference>
<dbReference type="InterPro" id="IPR020830">
    <property type="entry name" value="GlycerAld_3-P_DH_AS"/>
</dbReference>
<dbReference type="InterPro" id="IPR020829">
    <property type="entry name" value="GlycerAld_3-P_DH_cat"/>
</dbReference>
<dbReference type="InterPro" id="IPR020828">
    <property type="entry name" value="GlycerAld_3-P_DH_NAD(P)-bd"/>
</dbReference>
<dbReference type="InterPro" id="IPR006436">
    <property type="entry name" value="Glyceraldehyde-3-P_DH_2_arc"/>
</dbReference>
<dbReference type="InterPro" id="IPR036291">
    <property type="entry name" value="NAD(P)-bd_dom_sf"/>
</dbReference>
<dbReference type="NCBIfam" id="TIGR01546">
    <property type="entry name" value="GAPDH-II_archae"/>
    <property type="match status" value="1"/>
</dbReference>
<dbReference type="NCBIfam" id="NF003251">
    <property type="entry name" value="PRK04207.1"/>
    <property type="match status" value="1"/>
</dbReference>
<dbReference type="Pfam" id="PF02800">
    <property type="entry name" value="Gp_dh_C"/>
    <property type="match status" value="1"/>
</dbReference>
<dbReference type="PIRSF" id="PIRSF000149">
    <property type="entry name" value="GAP_DH"/>
    <property type="match status" value="1"/>
</dbReference>
<dbReference type="SMART" id="SM00846">
    <property type="entry name" value="Gp_dh_N"/>
    <property type="match status" value="1"/>
</dbReference>
<dbReference type="SUPFAM" id="SSF55347">
    <property type="entry name" value="Glyceraldehyde-3-phosphate dehydrogenase-like, C-terminal domain"/>
    <property type="match status" value="1"/>
</dbReference>
<dbReference type="SUPFAM" id="SSF51735">
    <property type="entry name" value="NAD(P)-binding Rossmann-fold domains"/>
    <property type="match status" value="1"/>
</dbReference>
<dbReference type="PROSITE" id="PS00071">
    <property type="entry name" value="GAPDH"/>
    <property type="match status" value="1"/>
</dbReference>
<feature type="chain" id="PRO_0000232388" description="Glyceraldehyde-3-phosphate dehydrogenase">
    <location>
        <begin position="1"/>
        <end position="354"/>
    </location>
</feature>
<feature type="active site" description="Nucleophile" evidence="1">
    <location>
        <position position="138"/>
    </location>
</feature>
<feature type="binding site" evidence="1">
    <location>
        <begin position="11"/>
        <end position="12"/>
    </location>
    <ligand>
        <name>NAD(+)</name>
        <dbReference type="ChEBI" id="CHEBI:57540"/>
    </ligand>
</feature>
<feature type="binding site" evidence="1">
    <location>
        <position position="108"/>
    </location>
    <ligand>
        <name>NAD(+)</name>
        <dbReference type="ChEBI" id="CHEBI:57540"/>
    </ligand>
</feature>
<feature type="binding site" evidence="1">
    <location>
        <begin position="137"/>
        <end position="139"/>
    </location>
    <ligand>
        <name>D-glyceraldehyde 3-phosphate</name>
        <dbReference type="ChEBI" id="CHEBI:59776"/>
    </ligand>
</feature>
<feature type="binding site" evidence="1">
    <location>
        <position position="166"/>
    </location>
    <ligand>
        <name>NAD(+)</name>
        <dbReference type="ChEBI" id="CHEBI:57540"/>
    </ligand>
</feature>
<feature type="binding site" evidence="1">
    <location>
        <begin position="192"/>
        <end position="193"/>
    </location>
    <ligand>
        <name>D-glyceraldehyde 3-phosphate</name>
        <dbReference type="ChEBI" id="CHEBI:59776"/>
    </ligand>
</feature>
<feature type="binding site" evidence="1">
    <location>
        <position position="299"/>
    </location>
    <ligand>
        <name>NAD(+)</name>
        <dbReference type="ChEBI" id="CHEBI:57540"/>
    </ligand>
</feature>
<evidence type="ECO:0000255" key="1">
    <source>
        <dbReference type="HAMAP-Rule" id="MF_00559"/>
    </source>
</evidence>